<comment type="function">
    <text evidence="1">Produces ATP from ADP in the presence of a proton gradient across the membrane. The catalytic sites are hosted primarily by the beta subunits.</text>
</comment>
<comment type="catalytic activity">
    <reaction evidence="1">
        <text>ATP + H2O + 4 H(+)(in) = ADP + phosphate + 5 H(+)(out)</text>
        <dbReference type="Rhea" id="RHEA:57720"/>
        <dbReference type="ChEBI" id="CHEBI:15377"/>
        <dbReference type="ChEBI" id="CHEBI:15378"/>
        <dbReference type="ChEBI" id="CHEBI:30616"/>
        <dbReference type="ChEBI" id="CHEBI:43474"/>
        <dbReference type="ChEBI" id="CHEBI:456216"/>
        <dbReference type="EC" id="7.1.2.2"/>
    </reaction>
</comment>
<comment type="subunit">
    <text evidence="1">F-type ATPases have 2 components, CF(1) - the catalytic core - and CF(0) - the membrane proton channel. CF(1) has five subunits: alpha(3), beta(3), gamma(1), delta(1), epsilon(1). CF(0) has four main subunits: a(1), b(1), b'(1) and c(9-12).</text>
</comment>
<comment type="subcellular location">
    <subcellularLocation>
        <location evidence="1">Plastid</location>
        <location evidence="1">Chloroplast thylakoid membrane</location>
        <topology evidence="1">Peripheral membrane protein</topology>
    </subcellularLocation>
</comment>
<comment type="similarity">
    <text evidence="1">Belongs to the ATPase alpha/beta chains family.</text>
</comment>
<organism>
    <name type="scientific">Calycanthus floridus</name>
    <name type="common">Eastern sweetshrub</name>
    <dbReference type="NCBI Taxonomy" id="3429"/>
    <lineage>
        <taxon>Eukaryota</taxon>
        <taxon>Viridiplantae</taxon>
        <taxon>Streptophyta</taxon>
        <taxon>Embryophyta</taxon>
        <taxon>Tracheophyta</taxon>
        <taxon>Spermatophyta</taxon>
        <taxon>Magnoliopsida</taxon>
        <taxon>Magnoliidae</taxon>
        <taxon>Laurales</taxon>
        <taxon>Calycanthaceae</taxon>
        <taxon>Calycanthus</taxon>
    </lineage>
</organism>
<geneLocation type="chloroplast"/>
<accession>Q9MRQ5</accession>
<protein>
    <recommendedName>
        <fullName evidence="1">ATP synthase subunit beta, chloroplastic</fullName>
        <ecNumber evidence="1">7.1.2.2</ecNumber>
    </recommendedName>
    <alternativeName>
        <fullName evidence="1">ATP synthase F1 sector subunit beta</fullName>
    </alternativeName>
    <alternativeName>
        <fullName evidence="1">F-ATPase subunit beta</fullName>
    </alternativeName>
</protein>
<proteinExistence type="inferred from homology"/>
<keyword id="KW-0066">ATP synthesis</keyword>
<keyword id="KW-0067">ATP-binding</keyword>
<keyword id="KW-0139">CF(1)</keyword>
<keyword id="KW-0150">Chloroplast</keyword>
<keyword id="KW-0375">Hydrogen ion transport</keyword>
<keyword id="KW-0406">Ion transport</keyword>
<keyword id="KW-0472">Membrane</keyword>
<keyword id="KW-0547">Nucleotide-binding</keyword>
<keyword id="KW-0934">Plastid</keyword>
<keyword id="KW-0793">Thylakoid</keyword>
<keyword id="KW-1278">Translocase</keyword>
<keyword id="KW-0813">Transport</keyword>
<evidence type="ECO:0000255" key="1">
    <source>
        <dbReference type="HAMAP-Rule" id="MF_01347"/>
    </source>
</evidence>
<dbReference type="EC" id="7.1.2.2" evidence="1"/>
<dbReference type="EMBL" id="AJ235422">
    <property type="protein sequence ID" value="CAB89706.1"/>
    <property type="molecule type" value="Genomic_DNA"/>
</dbReference>
<dbReference type="SMR" id="Q9MRQ5"/>
<dbReference type="GO" id="GO:0009535">
    <property type="term" value="C:chloroplast thylakoid membrane"/>
    <property type="evidence" value="ECO:0007669"/>
    <property type="project" value="UniProtKB-SubCell"/>
</dbReference>
<dbReference type="GO" id="GO:0005739">
    <property type="term" value="C:mitochondrion"/>
    <property type="evidence" value="ECO:0007669"/>
    <property type="project" value="GOC"/>
</dbReference>
<dbReference type="GO" id="GO:0045259">
    <property type="term" value="C:proton-transporting ATP synthase complex"/>
    <property type="evidence" value="ECO:0007669"/>
    <property type="project" value="UniProtKB-KW"/>
</dbReference>
<dbReference type="GO" id="GO:0005524">
    <property type="term" value="F:ATP binding"/>
    <property type="evidence" value="ECO:0007669"/>
    <property type="project" value="UniProtKB-UniRule"/>
</dbReference>
<dbReference type="GO" id="GO:0016887">
    <property type="term" value="F:ATP hydrolysis activity"/>
    <property type="evidence" value="ECO:0007669"/>
    <property type="project" value="InterPro"/>
</dbReference>
<dbReference type="GO" id="GO:0046933">
    <property type="term" value="F:proton-transporting ATP synthase activity, rotational mechanism"/>
    <property type="evidence" value="ECO:0007669"/>
    <property type="project" value="UniProtKB-UniRule"/>
</dbReference>
<dbReference type="GO" id="GO:0042776">
    <property type="term" value="P:proton motive force-driven mitochondrial ATP synthesis"/>
    <property type="evidence" value="ECO:0007669"/>
    <property type="project" value="TreeGrafter"/>
</dbReference>
<dbReference type="CDD" id="cd18110">
    <property type="entry name" value="ATP-synt_F1_beta_C"/>
    <property type="match status" value="1"/>
</dbReference>
<dbReference type="CDD" id="cd18115">
    <property type="entry name" value="ATP-synt_F1_beta_N"/>
    <property type="match status" value="1"/>
</dbReference>
<dbReference type="CDD" id="cd01133">
    <property type="entry name" value="F1-ATPase_beta_CD"/>
    <property type="match status" value="1"/>
</dbReference>
<dbReference type="FunFam" id="1.10.1140.10:FF:000001">
    <property type="entry name" value="ATP synthase subunit beta"/>
    <property type="match status" value="1"/>
</dbReference>
<dbReference type="FunFam" id="3.40.50.12240:FF:000006">
    <property type="entry name" value="ATP synthase subunit beta"/>
    <property type="match status" value="1"/>
</dbReference>
<dbReference type="FunFam" id="3.40.50.300:FF:000004">
    <property type="entry name" value="ATP synthase subunit beta"/>
    <property type="match status" value="1"/>
</dbReference>
<dbReference type="FunFam" id="2.40.10.170:FF:000002">
    <property type="entry name" value="ATP synthase subunit beta, chloroplastic"/>
    <property type="match status" value="1"/>
</dbReference>
<dbReference type="Gene3D" id="2.40.10.170">
    <property type="match status" value="1"/>
</dbReference>
<dbReference type="Gene3D" id="1.10.1140.10">
    <property type="entry name" value="Bovine Mitochondrial F1-atpase, Atp Synthase Beta Chain, Chain D, domain 3"/>
    <property type="match status" value="1"/>
</dbReference>
<dbReference type="Gene3D" id="3.40.50.300">
    <property type="entry name" value="P-loop containing nucleotide triphosphate hydrolases"/>
    <property type="match status" value="1"/>
</dbReference>
<dbReference type="HAMAP" id="MF_01347">
    <property type="entry name" value="ATP_synth_beta_bact"/>
    <property type="match status" value="1"/>
</dbReference>
<dbReference type="InterPro" id="IPR003593">
    <property type="entry name" value="AAA+_ATPase"/>
</dbReference>
<dbReference type="InterPro" id="IPR055190">
    <property type="entry name" value="ATP-synt_VA_C"/>
</dbReference>
<dbReference type="InterPro" id="IPR005722">
    <property type="entry name" value="ATP_synth_F1_bsu"/>
</dbReference>
<dbReference type="InterPro" id="IPR020003">
    <property type="entry name" value="ATPase_a/bsu_AS"/>
</dbReference>
<dbReference type="InterPro" id="IPR050053">
    <property type="entry name" value="ATPase_alpha/beta_chains"/>
</dbReference>
<dbReference type="InterPro" id="IPR004100">
    <property type="entry name" value="ATPase_F1/V1/A1_a/bsu_N"/>
</dbReference>
<dbReference type="InterPro" id="IPR036121">
    <property type="entry name" value="ATPase_F1/V1/A1_a/bsu_N_sf"/>
</dbReference>
<dbReference type="InterPro" id="IPR000194">
    <property type="entry name" value="ATPase_F1/V1/A1_a/bsu_nucl-bd"/>
</dbReference>
<dbReference type="InterPro" id="IPR024034">
    <property type="entry name" value="ATPase_F1/V1_b/a_C"/>
</dbReference>
<dbReference type="InterPro" id="IPR027417">
    <property type="entry name" value="P-loop_NTPase"/>
</dbReference>
<dbReference type="NCBIfam" id="TIGR01039">
    <property type="entry name" value="atpD"/>
    <property type="match status" value="1"/>
</dbReference>
<dbReference type="PANTHER" id="PTHR15184">
    <property type="entry name" value="ATP SYNTHASE"/>
    <property type="match status" value="1"/>
</dbReference>
<dbReference type="PANTHER" id="PTHR15184:SF71">
    <property type="entry name" value="ATP SYNTHASE SUBUNIT BETA, MITOCHONDRIAL"/>
    <property type="match status" value="1"/>
</dbReference>
<dbReference type="Pfam" id="PF00006">
    <property type="entry name" value="ATP-synt_ab"/>
    <property type="match status" value="1"/>
</dbReference>
<dbReference type="Pfam" id="PF02874">
    <property type="entry name" value="ATP-synt_ab_N"/>
    <property type="match status" value="1"/>
</dbReference>
<dbReference type="Pfam" id="PF22919">
    <property type="entry name" value="ATP-synt_VA_C"/>
    <property type="match status" value="1"/>
</dbReference>
<dbReference type="SMART" id="SM00382">
    <property type="entry name" value="AAA"/>
    <property type="match status" value="1"/>
</dbReference>
<dbReference type="SUPFAM" id="SSF47917">
    <property type="entry name" value="C-terminal domain of alpha and beta subunits of F1 ATP synthase"/>
    <property type="match status" value="1"/>
</dbReference>
<dbReference type="SUPFAM" id="SSF50615">
    <property type="entry name" value="N-terminal domain of alpha and beta subunits of F1 ATP synthase"/>
    <property type="match status" value="1"/>
</dbReference>
<dbReference type="SUPFAM" id="SSF52540">
    <property type="entry name" value="P-loop containing nucleoside triphosphate hydrolases"/>
    <property type="match status" value="1"/>
</dbReference>
<dbReference type="PROSITE" id="PS00152">
    <property type="entry name" value="ATPASE_ALPHA_BETA"/>
    <property type="match status" value="1"/>
</dbReference>
<sequence>MRINPTTSGSGVSTLEKKTLGRIVQIIGPVLDVAFPPGKMPNIYNALVVKGRDTVGQQINVTCEVQQLLGNNRVRAVAMSATDGLMRGMEVIDTGAPLSVPVGGATLGRIFNVLGEPVDNLGPVDTRTTSPIHRSAPAFIQLDTKLSIFETGIKVVDLLAPYRRGGKIGLFGGAGVGKTVLIMELINNIAKAHGGVSVFGGVGERTREGNDLYMEMKESGVINEQNIAESKVALVHGQMNEPPGARMRVGLTALTMAEYFRDVNEQDVLLFIDNIFRFVQAGSEVSALLGRMPSAVGYQPTLSTEMGSLQERITSTKEGSITSIQAVYVPADDLTDPAPATTFAHLDATTVLSRGLAAKGIYPAVDPLDSTSTMLQPRIVGEEHYEIAQRVKQTSQRYKELQDIIAILGLDELSEEDRLTVARARKIERFLSQPFFVAEVFTGSPGKYVGLAETIRGFQLILSGELDGLPEQAFYLVGNIDEATAKAMNLEVESTLKK</sequence>
<name>ATPB_CALFL</name>
<reference key="1">
    <citation type="journal article" date="2000" name="Syst. Biol.">
        <title>Phylogenetics of flowering plants based upon a combined analysis of plastid atpB and rbcL gene sequences.</title>
        <authorList>
            <person name="Savolainen V."/>
            <person name="Chase M.W."/>
            <person name="Morton C.M."/>
            <person name="Hoot S.B."/>
            <person name="Soltis D.E."/>
            <person name="Bayer C."/>
            <person name="Fay M.F."/>
            <person name="de Bruijn A."/>
            <person name="Sullivan S."/>
            <person name="Qiu Y.-L."/>
        </authorList>
    </citation>
    <scope>NUCLEOTIDE SEQUENCE [GENOMIC DNA]</scope>
</reference>
<feature type="chain" id="PRO_0000254452" description="ATP synthase subunit beta, chloroplastic">
    <location>
        <begin position="1"/>
        <end position="498"/>
    </location>
</feature>
<feature type="binding site" evidence="1">
    <location>
        <begin position="172"/>
        <end position="179"/>
    </location>
    <ligand>
        <name>ATP</name>
        <dbReference type="ChEBI" id="CHEBI:30616"/>
    </ligand>
</feature>
<gene>
    <name evidence="1" type="primary">atpB</name>
</gene>